<organism>
    <name type="scientific">Salmonella paratyphi A (strain ATCC 9150 / SARB42)</name>
    <dbReference type="NCBI Taxonomy" id="295319"/>
    <lineage>
        <taxon>Bacteria</taxon>
        <taxon>Pseudomonadati</taxon>
        <taxon>Pseudomonadota</taxon>
        <taxon>Gammaproteobacteria</taxon>
        <taxon>Enterobacterales</taxon>
        <taxon>Enterobacteriaceae</taxon>
        <taxon>Salmonella</taxon>
    </lineage>
</organism>
<protein>
    <recommendedName>
        <fullName evidence="1">ATP synthase subunit a</fullName>
    </recommendedName>
    <alternativeName>
        <fullName evidence="1">ATP synthase F0 sector subunit a</fullName>
    </alternativeName>
    <alternativeName>
        <fullName evidence="1">F-ATPase subunit 6</fullName>
    </alternativeName>
</protein>
<reference key="1">
    <citation type="journal article" date="2004" name="Nat. Genet.">
        <title>Comparison of genome degradation in Paratyphi A and Typhi, human-restricted serovars of Salmonella enterica that cause typhoid.</title>
        <authorList>
            <person name="McClelland M."/>
            <person name="Sanderson K.E."/>
            <person name="Clifton S.W."/>
            <person name="Latreille P."/>
            <person name="Porwollik S."/>
            <person name="Sabo A."/>
            <person name="Meyer R."/>
            <person name="Bieri T."/>
            <person name="Ozersky P."/>
            <person name="McLellan M."/>
            <person name="Harkins C.R."/>
            <person name="Wang C."/>
            <person name="Nguyen C."/>
            <person name="Berghoff A."/>
            <person name="Elliott G."/>
            <person name="Kohlberg S."/>
            <person name="Strong C."/>
            <person name="Du F."/>
            <person name="Carter J."/>
            <person name="Kremizki C."/>
            <person name="Layman D."/>
            <person name="Leonard S."/>
            <person name="Sun H."/>
            <person name="Fulton L."/>
            <person name="Nash W."/>
            <person name="Miner T."/>
            <person name="Minx P."/>
            <person name="Delehaunty K."/>
            <person name="Fronick C."/>
            <person name="Magrini V."/>
            <person name="Nhan M."/>
            <person name="Warren W."/>
            <person name="Florea L."/>
            <person name="Spieth J."/>
            <person name="Wilson R.K."/>
        </authorList>
    </citation>
    <scope>NUCLEOTIDE SEQUENCE [LARGE SCALE GENOMIC DNA]</scope>
    <source>
        <strain>ATCC 9150 / SARB42</strain>
    </source>
</reference>
<comment type="function">
    <text evidence="1">Key component of the proton channel; it plays a direct role in the translocation of protons across the membrane.</text>
</comment>
<comment type="subunit">
    <text evidence="1">F-type ATPases have 2 components, CF(1) - the catalytic core - and CF(0) - the membrane proton channel. CF(1) has five subunits: alpha(3), beta(3), gamma(1), delta(1), epsilon(1). CF(0) has three main subunits: a(1), b(2) and c(9-12). The alpha and beta chains form an alternating ring which encloses part of the gamma chain. CF(1) is attached to CF(0) by a central stalk formed by the gamma and epsilon chains, while a peripheral stalk is formed by the delta and b chains.</text>
</comment>
<comment type="subcellular location">
    <subcellularLocation>
        <location evidence="1">Cell inner membrane</location>
        <topology evidence="1">Multi-pass membrane protein</topology>
    </subcellularLocation>
</comment>
<comment type="similarity">
    <text evidence="1">Belongs to the ATPase A chain family.</text>
</comment>
<dbReference type="EMBL" id="CP000026">
    <property type="protein sequence ID" value="AAV79502.1"/>
    <property type="molecule type" value="Genomic_DNA"/>
</dbReference>
<dbReference type="RefSeq" id="WP_000135632.1">
    <property type="nucleotide sequence ID" value="NC_006511.1"/>
</dbReference>
<dbReference type="SMR" id="Q5PKW6"/>
<dbReference type="KEGG" id="spt:SPA3710"/>
<dbReference type="HOGENOM" id="CLU_041018_1_0_6"/>
<dbReference type="Proteomes" id="UP000008185">
    <property type="component" value="Chromosome"/>
</dbReference>
<dbReference type="GO" id="GO:0005886">
    <property type="term" value="C:plasma membrane"/>
    <property type="evidence" value="ECO:0007669"/>
    <property type="project" value="UniProtKB-SubCell"/>
</dbReference>
<dbReference type="GO" id="GO:0045259">
    <property type="term" value="C:proton-transporting ATP synthase complex"/>
    <property type="evidence" value="ECO:0007669"/>
    <property type="project" value="UniProtKB-KW"/>
</dbReference>
<dbReference type="GO" id="GO:0046933">
    <property type="term" value="F:proton-transporting ATP synthase activity, rotational mechanism"/>
    <property type="evidence" value="ECO:0007669"/>
    <property type="project" value="UniProtKB-UniRule"/>
</dbReference>
<dbReference type="GO" id="GO:0042777">
    <property type="term" value="P:proton motive force-driven plasma membrane ATP synthesis"/>
    <property type="evidence" value="ECO:0007669"/>
    <property type="project" value="TreeGrafter"/>
</dbReference>
<dbReference type="CDD" id="cd00310">
    <property type="entry name" value="ATP-synt_Fo_a_6"/>
    <property type="match status" value="1"/>
</dbReference>
<dbReference type="FunFam" id="1.20.120.220:FF:000002">
    <property type="entry name" value="ATP synthase subunit a"/>
    <property type="match status" value="1"/>
</dbReference>
<dbReference type="Gene3D" id="1.20.120.220">
    <property type="entry name" value="ATP synthase, F0 complex, subunit A"/>
    <property type="match status" value="1"/>
</dbReference>
<dbReference type="HAMAP" id="MF_01393">
    <property type="entry name" value="ATP_synth_a_bact"/>
    <property type="match status" value="1"/>
</dbReference>
<dbReference type="InterPro" id="IPR045082">
    <property type="entry name" value="ATP_syn_F0_a_bact/chloroplast"/>
</dbReference>
<dbReference type="InterPro" id="IPR000568">
    <property type="entry name" value="ATP_synth_F0_asu"/>
</dbReference>
<dbReference type="InterPro" id="IPR023011">
    <property type="entry name" value="ATP_synth_F0_asu_AS"/>
</dbReference>
<dbReference type="InterPro" id="IPR035908">
    <property type="entry name" value="F0_ATP_A_sf"/>
</dbReference>
<dbReference type="NCBIfam" id="TIGR01131">
    <property type="entry name" value="ATP_synt_6_or_A"/>
    <property type="match status" value="1"/>
</dbReference>
<dbReference type="NCBIfam" id="NF004477">
    <property type="entry name" value="PRK05815.1-1"/>
    <property type="match status" value="1"/>
</dbReference>
<dbReference type="PANTHER" id="PTHR42823">
    <property type="entry name" value="ATP SYNTHASE SUBUNIT A, CHLOROPLASTIC"/>
    <property type="match status" value="1"/>
</dbReference>
<dbReference type="PANTHER" id="PTHR42823:SF3">
    <property type="entry name" value="ATP SYNTHASE SUBUNIT A, CHLOROPLASTIC"/>
    <property type="match status" value="1"/>
</dbReference>
<dbReference type="Pfam" id="PF00119">
    <property type="entry name" value="ATP-synt_A"/>
    <property type="match status" value="1"/>
</dbReference>
<dbReference type="PRINTS" id="PR00123">
    <property type="entry name" value="ATPASEA"/>
</dbReference>
<dbReference type="SUPFAM" id="SSF81336">
    <property type="entry name" value="F1F0 ATP synthase subunit A"/>
    <property type="match status" value="1"/>
</dbReference>
<dbReference type="PROSITE" id="PS00449">
    <property type="entry name" value="ATPASE_A"/>
    <property type="match status" value="1"/>
</dbReference>
<feature type="chain" id="PRO_0000362440" description="ATP synthase subunit a">
    <location>
        <begin position="1"/>
        <end position="271"/>
    </location>
</feature>
<feature type="transmembrane region" description="Helical" evidence="1">
    <location>
        <begin position="38"/>
        <end position="58"/>
    </location>
</feature>
<feature type="transmembrane region" description="Helical" evidence="1">
    <location>
        <begin position="100"/>
        <end position="120"/>
    </location>
</feature>
<feature type="transmembrane region" description="Helical" evidence="1">
    <location>
        <begin position="146"/>
        <end position="166"/>
    </location>
</feature>
<feature type="transmembrane region" description="Helical" evidence="1">
    <location>
        <begin position="220"/>
        <end position="240"/>
    </location>
</feature>
<feature type="transmembrane region" description="Helical" evidence="1">
    <location>
        <begin position="242"/>
        <end position="262"/>
    </location>
</feature>
<name>ATP6_SALPA</name>
<sequence>MASENMTPQEYIGHHLNNLQLDLRTFSLVDPQNPPATFWTLNIDSMFFSVVLGLLFLVMFRSVAKKATSGVPGKFQTAIELIVGFVHGSVKDMYHGKSKLIAPLALTIFVWVFLMNLMDLLPIDLLPYIAEHWLGLPATRVVPSADVNITLSMALGVFILILFYSIKMKGIGGFAKELTLQPFNHWAFIPVNLILEGVSLLSKPVSLGLRLFGNMYAGELIFILIAGLLPWWSQWILNVPWAIFHILIITLQAFIFMVLTIVYLSMASEEH</sequence>
<gene>
    <name evidence="1" type="primary">atpB</name>
    <name type="ordered locus">SPA3710</name>
</gene>
<accession>Q5PKW6</accession>
<keyword id="KW-0066">ATP synthesis</keyword>
<keyword id="KW-0997">Cell inner membrane</keyword>
<keyword id="KW-1003">Cell membrane</keyword>
<keyword id="KW-0138">CF(0)</keyword>
<keyword id="KW-0375">Hydrogen ion transport</keyword>
<keyword id="KW-0406">Ion transport</keyword>
<keyword id="KW-0472">Membrane</keyword>
<keyword id="KW-0812">Transmembrane</keyword>
<keyword id="KW-1133">Transmembrane helix</keyword>
<keyword id="KW-0813">Transport</keyword>
<evidence type="ECO:0000255" key="1">
    <source>
        <dbReference type="HAMAP-Rule" id="MF_01393"/>
    </source>
</evidence>
<proteinExistence type="inferred from homology"/>